<organism>
    <name type="scientific">Staphylococcus aureus</name>
    <dbReference type="NCBI Taxonomy" id="1280"/>
    <lineage>
        <taxon>Bacteria</taxon>
        <taxon>Bacillati</taxon>
        <taxon>Bacillota</taxon>
        <taxon>Bacilli</taxon>
        <taxon>Bacillales</taxon>
        <taxon>Staphylococcaceae</taxon>
        <taxon>Staphylococcus</taxon>
    </lineage>
</organism>
<evidence type="ECO:0000305" key="1"/>
<dbReference type="EMBL" id="U10927">
    <property type="protein sequence ID" value="AAA64651.1"/>
    <property type="molecule type" value="Genomic_DNA"/>
</dbReference>
<dbReference type="RefSeq" id="WP_115294917.1">
    <property type="nucleotide sequence ID" value="NZ_UGZL01000001.1"/>
</dbReference>
<dbReference type="SMR" id="P39861"/>
<dbReference type="UniPathway" id="UPA00934"/>
<dbReference type="GO" id="GO:0051287">
    <property type="term" value="F:NAD binding"/>
    <property type="evidence" value="ECO:0007669"/>
    <property type="project" value="InterPro"/>
</dbReference>
<dbReference type="GO" id="GO:0016628">
    <property type="term" value="F:oxidoreductase activity, acting on the CH-CH group of donors, NAD or NADP as acceptor"/>
    <property type="evidence" value="ECO:0007669"/>
    <property type="project" value="InterPro"/>
</dbReference>
<dbReference type="GO" id="GO:0016616">
    <property type="term" value="F:oxidoreductase activity, acting on the CH-OH group of donors, NAD or NADP as acceptor"/>
    <property type="evidence" value="ECO:0007669"/>
    <property type="project" value="InterPro"/>
</dbReference>
<dbReference type="GO" id="GO:0045227">
    <property type="term" value="P:capsule polysaccharide biosynthetic process"/>
    <property type="evidence" value="ECO:0007669"/>
    <property type="project" value="UniProtKB-UniPathway"/>
</dbReference>
<dbReference type="Gene3D" id="3.40.50.720">
    <property type="entry name" value="NAD(P)-binding Rossmann-like Domain"/>
    <property type="match status" value="2"/>
</dbReference>
<dbReference type="InterPro" id="IPR008927">
    <property type="entry name" value="6-PGluconate_DH-like_C_sf"/>
</dbReference>
<dbReference type="InterPro" id="IPR036291">
    <property type="entry name" value="NAD(P)-bd_dom_sf"/>
</dbReference>
<dbReference type="InterPro" id="IPR017476">
    <property type="entry name" value="UDP-Glc/GDP-Man"/>
</dbReference>
<dbReference type="InterPro" id="IPR014027">
    <property type="entry name" value="UDP-Glc/GDP-Man_DH_C"/>
</dbReference>
<dbReference type="InterPro" id="IPR036220">
    <property type="entry name" value="UDP-Glc/GDP-Man_DH_C_sf"/>
</dbReference>
<dbReference type="InterPro" id="IPR014026">
    <property type="entry name" value="UDP-Glc/GDP-Man_DH_dimer"/>
</dbReference>
<dbReference type="InterPro" id="IPR001732">
    <property type="entry name" value="UDP-Glc/GDP-Man_DH_N"/>
</dbReference>
<dbReference type="InterPro" id="IPR028359">
    <property type="entry name" value="UDP_ManNAc/GlcNAc_DH"/>
</dbReference>
<dbReference type="NCBIfam" id="TIGR03026">
    <property type="entry name" value="NDP-sugDHase"/>
    <property type="match status" value="1"/>
</dbReference>
<dbReference type="PANTHER" id="PTHR43491">
    <property type="entry name" value="UDP-N-ACETYL-D-MANNOSAMINE DEHYDROGENASE"/>
    <property type="match status" value="1"/>
</dbReference>
<dbReference type="PANTHER" id="PTHR43491:SF2">
    <property type="entry name" value="UDP-N-ACETYL-D-MANNOSAMINE DEHYDROGENASE"/>
    <property type="match status" value="1"/>
</dbReference>
<dbReference type="Pfam" id="PF00984">
    <property type="entry name" value="UDPG_MGDP_dh"/>
    <property type="match status" value="1"/>
</dbReference>
<dbReference type="Pfam" id="PF03720">
    <property type="entry name" value="UDPG_MGDP_dh_C"/>
    <property type="match status" value="1"/>
</dbReference>
<dbReference type="Pfam" id="PF03721">
    <property type="entry name" value="UDPG_MGDP_dh_N"/>
    <property type="match status" value="1"/>
</dbReference>
<dbReference type="PIRSF" id="PIRSF500136">
    <property type="entry name" value="UDP_ManNAc_DH"/>
    <property type="match status" value="1"/>
</dbReference>
<dbReference type="PIRSF" id="PIRSF000124">
    <property type="entry name" value="UDPglc_GDPman_dh"/>
    <property type="match status" value="1"/>
</dbReference>
<dbReference type="SMART" id="SM00984">
    <property type="entry name" value="UDPG_MGDP_dh_C"/>
    <property type="match status" value="1"/>
</dbReference>
<dbReference type="SUPFAM" id="SSF48179">
    <property type="entry name" value="6-phosphogluconate dehydrogenase C-terminal domain-like"/>
    <property type="match status" value="1"/>
</dbReference>
<dbReference type="SUPFAM" id="SSF51735">
    <property type="entry name" value="NAD(P)-binding Rossmann-fold domains"/>
    <property type="match status" value="1"/>
</dbReference>
<dbReference type="SUPFAM" id="SSF52413">
    <property type="entry name" value="UDP-glucose/GDP-mannose dehydrogenase C-terminal domain"/>
    <property type="match status" value="1"/>
</dbReference>
<keyword id="KW-0972">Capsule biogenesis/degradation</keyword>
<keyword id="KW-0270">Exopolysaccharide synthesis</keyword>
<keyword id="KW-0520">NAD</keyword>
<keyword id="KW-0560">Oxidoreductase</keyword>
<proteinExistence type="inferred from homology"/>
<gene>
    <name type="primary">capL</name>
</gene>
<reference key="1">
    <citation type="journal article" date="1994" name="J. Bacteriol.">
        <title>Sequence analysis and molecular characterization of genes required for the biosynthesis of type 1 capsular polysaccharide in Staphylococcus aureus.</title>
        <authorList>
            <person name="Lin W.S."/>
            <person name="Cunneen T."/>
            <person name="Lee C.Y."/>
        </authorList>
    </citation>
    <scope>NUCLEOTIDE SEQUENCE [GENOMIC DNA]</scope>
    <source>
        <strain>ATCC 49951 / M / NCTC 10649</strain>
    </source>
</reference>
<comment type="function">
    <text>Required for the biosynthesis of type 1 capsular polysaccharide.</text>
</comment>
<comment type="pathway">
    <text>Capsule biogenesis; capsule polysaccharide biosynthesis.</text>
</comment>
<comment type="similarity">
    <text evidence="1">Belongs to the UDP-glucose/GDP-mannose dehydrogenase family.</text>
</comment>
<name>CAPL_STAAU</name>
<protein>
    <recommendedName>
        <fullName>Protein CapL</fullName>
    </recommendedName>
</protein>
<feature type="chain" id="PRO_0000074072" description="Protein CapL">
    <location>
        <begin position="1"/>
        <end position="424"/>
    </location>
</feature>
<accession>P39861</accession>
<sequence length="424" mass="47184">MNRNIAVVGLGYVGLPVAVTFGNKHKVIGFDINESRIKELKNNYDRTNEVTENKLKNTNIEYTSNAEDLKKADFIIIAVPTPIDKHNKPDLLPLLKASETVGKVITPDTIVVYESTVYPGATEEECVPVLEKYSGLVCGKDFFVGYSPERINPGDKVHTFETITKVVSGQTLEVLEIVADVYSSVVTAGVHKASSIKVAEAAKVIENTQRDVNIALMNELAIIFDKLDIDTNEVLKASGTKWNFLNFKPGLVGGHCIGVDPYYLTHKAQEVGHHPEVILAGRRINDNMAKYIASNVIKELLKQGLEVQGATVNVLGLTFKENCPDLRNTKVIHIIEELKEYGLNVTVNDVEADKNEAKKFFGLDLIDTKELKMVDVVLFAVPHKDYMENKKDYINLVKDCGIVFDIKGIINSDELNVSQRLWRL</sequence>